<proteinExistence type="inferred from homology"/>
<sequence>MKLPLLGPVSVTGFQNPWFFLALLAVLLVIGLYVVQQFARRRRVLRFANMEVLERVAPPHPSRWRHVPTILLATSLVLLTTAMAGPTSDVRIPLNRAVVMLVIDVSESMASTDVPPNRLAAAKEAGKQFADQLTPAINLGLVEFAANATLLVPPTTNRAAVKAGIDSLQPAPKTATGEGIFTALQAIATVGSVMGGGEGPPPARIVLESDGAENVPLDPNAPQGAFTAARAAKAEGVQISTISFGTPYGTVDYEGATIPVPVDDQTLQKICEITDGQAFHADSLDSLKNVYSTLQRQIGYETVKGDASMAWMLLGAVVLAGAVLAGLLLNRRLPA</sequence>
<keyword id="KW-1003">Cell membrane</keyword>
<keyword id="KW-0472">Membrane</keyword>
<keyword id="KW-1185">Reference proteome</keyword>
<keyword id="KW-0812">Transmembrane</keyword>
<keyword id="KW-1133">Transmembrane helix</keyword>
<gene>
    <name type="ordered locus">MAP_3435c</name>
</gene>
<reference key="1">
    <citation type="journal article" date="2005" name="Proc. Natl. Acad. Sci. U.S.A.">
        <title>The complete genome sequence of Mycobacterium avium subspecies paratuberculosis.</title>
        <authorList>
            <person name="Li L."/>
            <person name="Bannantine J.P."/>
            <person name="Zhang Q."/>
            <person name="Amonsin A."/>
            <person name="May B.J."/>
            <person name="Alt D."/>
            <person name="Banerji N."/>
            <person name="Kanjilal S."/>
            <person name="Kapur V."/>
        </authorList>
    </citation>
    <scope>NUCLEOTIDE SEQUENCE [LARGE SCALE GENOMIC DNA]</scope>
    <source>
        <strain>ATCC BAA-968 / K-10</strain>
    </source>
</reference>
<protein>
    <recommendedName>
        <fullName evidence="1">UPF0353 protein MAP_3435c</fullName>
    </recommendedName>
</protein>
<evidence type="ECO:0000255" key="1">
    <source>
        <dbReference type="HAMAP-Rule" id="MF_01340"/>
    </source>
</evidence>
<feature type="chain" id="PRO_0000057647" description="UPF0353 protein MAP_3435c">
    <location>
        <begin position="1"/>
        <end position="335"/>
    </location>
</feature>
<feature type="transmembrane region" description="Helical" evidence="1">
    <location>
        <begin position="18"/>
        <end position="38"/>
    </location>
</feature>
<feature type="transmembrane region" description="Helical" evidence="1">
    <location>
        <begin position="67"/>
        <end position="87"/>
    </location>
</feature>
<feature type="transmembrane region" description="Helical" evidence="1">
    <location>
        <begin position="309"/>
        <end position="329"/>
    </location>
</feature>
<feature type="domain" description="VWFA" evidence="1">
    <location>
        <begin position="98"/>
        <end position="294"/>
    </location>
</feature>
<accession>Q73UD3</accession>
<name>Y3435_MYCPA</name>
<organism>
    <name type="scientific">Mycolicibacterium paratuberculosis (strain ATCC BAA-968 / K-10)</name>
    <name type="common">Mycobacterium paratuberculosis</name>
    <dbReference type="NCBI Taxonomy" id="262316"/>
    <lineage>
        <taxon>Bacteria</taxon>
        <taxon>Bacillati</taxon>
        <taxon>Actinomycetota</taxon>
        <taxon>Actinomycetes</taxon>
        <taxon>Mycobacteriales</taxon>
        <taxon>Mycobacteriaceae</taxon>
        <taxon>Mycobacterium</taxon>
        <taxon>Mycobacterium avium complex (MAC)</taxon>
    </lineage>
</organism>
<comment type="subcellular location">
    <subcellularLocation>
        <location evidence="1">Cell membrane</location>
        <topology evidence="1">Multi-pass membrane protein</topology>
    </subcellularLocation>
</comment>
<comment type="similarity">
    <text evidence="1">Belongs to the UPF0353 family.</text>
</comment>
<dbReference type="EMBL" id="AE016958">
    <property type="protein sequence ID" value="AAS05985.1"/>
    <property type="molecule type" value="Genomic_DNA"/>
</dbReference>
<dbReference type="RefSeq" id="WP_003874486.1">
    <property type="nucleotide sequence ID" value="NZ_CP106873.1"/>
</dbReference>
<dbReference type="SMR" id="Q73UD3"/>
<dbReference type="STRING" id="262316.MAP_3435c"/>
<dbReference type="KEGG" id="mpa:MAP_3435c"/>
<dbReference type="PATRIC" id="fig|262316.17.peg.3651"/>
<dbReference type="eggNOG" id="COG2304">
    <property type="taxonomic scope" value="Bacteria"/>
</dbReference>
<dbReference type="HOGENOM" id="CLU_024570_2_0_11"/>
<dbReference type="Proteomes" id="UP000000580">
    <property type="component" value="Chromosome"/>
</dbReference>
<dbReference type="GO" id="GO:0005886">
    <property type="term" value="C:plasma membrane"/>
    <property type="evidence" value="ECO:0007669"/>
    <property type="project" value="UniProtKB-SubCell"/>
</dbReference>
<dbReference type="Gene3D" id="3.40.50.410">
    <property type="entry name" value="von Willebrand factor, type A domain"/>
    <property type="match status" value="1"/>
</dbReference>
<dbReference type="HAMAP" id="MF_01340">
    <property type="entry name" value="UPF0353"/>
    <property type="match status" value="1"/>
</dbReference>
<dbReference type="InterPro" id="IPR024163">
    <property type="entry name" value="Aerotolerance_reg_N"/>
</dbReference>
<dbReference type="InterPro" id="IPR022933">
    <property type="entry name" value="UPF0353"/>
</dbReference>
<dbReference type="InterPro" id="IPR050768">
    <property type="entry name" value="UPF0353/GerABKA_families"/>
</dbReference>
<dbReference type="InterPro" id="IPR002035">
    <property type="entry name" value="VWF_A"/>
</dbReference>
<dbReference type="InterPro" id="IPR036465">
    <property type="entry name" value="vWFA_dom_sf"/>
</dbReference>
<dbReference type="NCBIfam" id="NF010238">
    <property type="entry name" value="PRK13685.1"/>
    <property type="match status" value="1"/>
</dbReference>
<dbReference type="PANTHER" id="PTHR22550:SF5">
    <property type="entry name" value="LEUCINE ZIPPER PROTEIN 4"/>
    <property type="match status" value="1"/>
</dbReference>
<dbReference type="PANTHER" id="PTHR22550">
    <property type="entry name" value="SPORE GERMINATION PROTEIN"/>
    <property type="match status" value="1"/>
</dbReference>
<dbReference type="Pfam" id="PF07584">
    <property type="entry name" value="BatA"/>
    <property type="match status" value="1"/>
</dbReference>
<dbReference type="Pfam" id="PF13519">
    <property type="entry name" value="VWA_2"/>
    <property type="match status" value="1"/>
</dbReference>
<dbReference type="SMART" id="SM00327">
    <property type="entry name" value="VWA"/>
    <property type="match status" value="1"/>
</dbReference>
<dbReference type="SUPFAM" id="SSF53300">
    <property type="entry name" value="vWA-like"/>
    <property type="match status" value="1"/>
</dbReference>
<dbReference type="PROSITE" id="PS50234">
    <property type="entry name" value="VWFA"/>
    <property type="match status" value="1"/>
</dbReference>